<reference key="1">
    <citation type="journal article" date="1998" name="Genetics">
        <title>Sequence-tagged-site (STS) markers of arbitrary genes: development, characterization and analysis of linkage in black spruce.</title>
        <authorList>
            <person name="Perry D.J."/>
            <person name="Bousquet J."/>
        </authorList>
    </citation>
    <scope>NUCLEOTIDE SEQUENCE [MRNA]</scope>
</reference>
<proteinExistence type="evidence at transcript level"/>
<dbReference type="EMBL" id="AF051246">
    <property type="protein sequence ID" value="AAC32146.1"/>
    <property type="molecule type" value="mRNA"/>
</dbReference>
<dbReference type="SMR" id="O65084"/>
<dbReference type="GO" id="GO:0005737">
    <property type="term" value="C:cytoplasm"/>
    <property type="evidence" value="ECO:0007669"/>
    <property type="project" value="UniProtKB-SubCell"/>
</dbReference>
<dbReference type="GO" id="GO:0005634">
    <property type="term" value="C:nucleus"/>
    <property type="evidence" value="ECO:0007669"/>
    <property type="project" value="UniProtKB-SubCell"/>
</dbReference>
<dbReference type="GO" id="GO:0019774">
    <property type="term" value="C:proteasome core complex, beta-subunit complex"/>
    <property type="evidence" value="ECO:0000250"/>
    <property type="project" value="UniProtKB"/>
</dbReference>
<dbReference type="GO" id="GO:0043161">
    <property type="term" value="P:proteasome-mediated ubiquitin-dependent protein catabolic process"/>
    <property type="evidence" value="ECO:0007669"/>
    <property type="project" value="InterPro"/>
</dbReference>
<dbReference type="CDD" id="cd03759">
    <property type="entry name" value="proteasome_beta_type_3"/>
    <property type="match status" value="1"/>
</dbReference>
<dbReference type="FunFam" id="3.60.20.10:FF:000032">
    <property type="entry name" value="Proteasome subunit beta"/>
    <property type="match status" value="1"/>
</dbReference>
<dbReference type="Gene3D" id="3.60.20.10">
    <property type="entry name" value="Glutamine Phosphoribosylpyrophosphate, subunit 1, domain 1"/>
    <property type="match status" value="1"/>
</dbReference>
<dbReference type="InterPro" id="IPR029055">
    <property type="entry name" value="Ntn_hydrolases_N"/>
</dbReference>
<dbReference type="InterPro" id="IPR033811">
    <property type="entry name" value="Proteasome_beta_3"/>
</dbReference>
<dbReference type="InterPro" id="IPR016050">
    <property type="entry name" value="Proteasome_bsu_CS"/>
</dbReference>
<dbReference type="InterPro" id="IPR001353">
    <property type="entry name" value="Proteasome_sua/b"/>
</dbReference>
<dbReference type="InterPro" id="IPR023333">
    <property type="entry name" value="Proteasome_suB-type"/>
</dbReference>
<dbReference type="PANTHER" id="PTHR32194">
    <property type="entry name" value="METALLOPROTEASE TLDD"/>
    <property type="match status" value="1"/>
</dbReference>
<dbReference type="PANTHER" id="PTHR32194:SF10">
    <property type="entry name" value="PROTEASOME SUBUNIT BETA TYPE-3"/>
    <property type="match status" value="1"/>
</dbReference>
<dbReference type="Pfam" id="PF00227">
    <property type="entry name" value="Proteasome"/>
    <property type="match status" value="1"/>
</dbReference>
<dbReference type="SUPFAM" id="SSF56235">
    <property type="entry name" value="N-terminal nucleophile aminohydrolases (Ntn hydrolases)"/>
    <property type="match status" value="1"/>
</dbReference>
<dbReference type="PROSITE" id="PS00854">
    <property type="entry name" value="PROTEASOME_BETA_1"/>
    <property type="match status" value="1"/>
</dbReference>
<dbReference type="PROSITE" id="PS51476">
    <property type="entry name" value="PROTEASOME_BETA_2"/>
    <property type="match status" value="1"/>
</dbReference>
<name>PSB3_PICMA</name>
<protein>
    <recommendedName>
        <fullName>Proteasome subunit beta type-3</fullName>
    </recommendedName>
    <alternativeName>
        <fullName>20S proteasome alpha subunit C</fullName>
    </alternativeName>
    <alternativeName>
        <fullName>20S proteasome subunit beta-3</fullName>
    </alternativeName>
</protein>
<accession>O65084</accession>
<evidence type="ECO:0000250" key="1"/>
<evidence type="ECO:0000255" key="2">
    <source>
        <dbReference type="PROSITE-ProRule" id="PRU00809"/>
    </source>
</evidence>
<feature type="chain" id="PRO_0000148068" description="Proteasome subunit beta type-3">
    <location>
        <begin position="1"/>
        <end position="204"/>
    </location>
</feature>
<organism>
    <name type="scientific">Picea mariana</name>
    <name type="common">Black spruce</name>
    <name type="synonym">Abies mariana</name>
    <dbReference type="NCBI Taxonomy" id="3335"/>
    <lineage>
        <taxon>Eukaryota</taxon>
        <taxon>Viridiplantae</taxon>
        <taxon>Streptophyta</taxon>
        <taxon>Embryophyta</taxon>
        <taxon>Tracheophyta</taxon>
        <taxon>Spermatophyta</taxon>
        <taxon>Pinopsida</taxon>
        <taxon>Pinidae</taxon>
        <taxon>Conifers I</taxon>
        <taxon>Pinales</taxon>
        <taxon>Pinaceae</taxon>
        <taxon>Picea</taxon>
    </lineage>
</organism>
<gene>
    <name type="primary">PBC1</name>
    <name type="synonym">SB65</name>
</gene>
<sequence length="204" mass="22908">MSIFEYNGSALVAMVGKNCFAIASDRRLGVQLQTIATDFQRIFKIHDKLYVGLSGLATDVQTLYQRFAFRHKLYQLREERNMRPETFASLVSALLYEKRFGPYFCQPVIAGLGEDDKPFICTMDSIGAKELAKDFVVAGTAAESLYGACESMYKPDMEPEELFETISQALLSSIDRDCLSGWGGHVYVVSPNQVIERTLKGRMD</sequence>
<keyword id="KW-0963">Cytoplasm</keyword>
<keyword id="KW-0539">Nucleus</keyword>
<keyword id="KW-0647">Proteasome</keyword>
<comment type="function">
    <text>Non-catalytic component of the proteasome, a multicatalytic proteinase complex which is characterized by its ability to cleave peptides with Arg, Phe, Tyr, Leu, and Glu adjacent to the leaving group at neutral or slightly basic pH. The proteasome has an ATP-dependent proteolytic activity.</text>
</comment>
<comment type="subunit">
    <text evidence="1">The 26S proteasome consists of a 20S proteasome core and two 19S regulatory subunits. The 20S proteasome core is composed of 28 subunits that are arranged in four stacked rings, resulting in a barrel-shaped structure. The two end rings are each formed by seven alpha subunits, and the two central rings are each formed by seven beta subunits. The catalytic chamber with the active sites is on the inside of the barrel (By similarity).</text>
</comment>
<comment type="subcellular location">
    <subcellularLocation>
        <location evidence="2">Cytoplasm</location>
    </subcellularLocation>
    <subcellularLocation>
        <location evidence="1">Nucleus</location>
    </subcellularLocation>
</comment>
<comment type="similarity">
    <text evidence="2">Belongs to the peptidase T1B family.</text>
</comment>